<proteinExistence type="evidence at transcript level"/>
<name>OXLD1_BOVIN</name>
<dbReference type="EMBL" id="BC123903">
    <property type="protein sequence ID" value="AAI23904.1"/>
    <property type="molecule type" value="mRNA"/>
</dbReference>
<dbReference type="RefSeq" id="NP_001099105.1">
    <property type="nucleotide sequence ID" value="NM_001105635.1"/>
</dbReference>
<dbReference type="FunCoup" id="A7YVI8">
    <property type="interactions" value="317"/>
</dbReference>
<dbReference type="STRING" id="9913.ENSBTAP00000000461"/>
<dbReference type="PaxDb" id="9913-ENSBTAP00000000461"/>
<dbReference type="Ensembl" id="ENSBTAT00000000461.5">
    <property type="protein sequence ID" value="ENSBTAP00000000461.4"/>
    <property type="gene ID" value="ENSBTAG00000000355.6"/>
</dbReference>
<dbReference type="GeneID" id="617776"/>
<dbReference type="KEGG" id="bta:617776"/>
<dbReference type="CTD" id="339229"/>
<dbReference type="VEuPathDB" id="HostDB:ENSBTAG00000000355"/>
<dbReference type="VGNC" id="VGNC:32511">
    <property type="gene designation" value="OXLD1"/>
</dbReference>
<dbReference type="eggNOG" id="ENOG502S8QT">
    <property type="taxonomic scope" value="Eukaryota"/>
</dbReference>
<dbReference type="GeneTree" id="ENSGT00390000003596"/>
<dbReference type="HOGENOM" id="CLU_144239_0_0_1"/>
<dbReference type="InParanoid" id="A7YVI8"/>
<dbReference type="OMA" id="RKFGKDH"/>
<dbReference type="OrthoDB" id="10064411at2759"/>
<dbReference type="TreeFam" id="TF353117"/>
<dbReference type="Proteomes" id="UP000009136">
    <property type="component" value="Chromosome 19"/>
</dbReference>
<dbReference type="Bgee" id="ENSBTAG00000000355">
    <property type="expression patterns" value="Expressed in retina and 105 other cell types or tissues"/>
</dbReference>
<dbReference type="InterPro" id="IPR019180">
    <property type="entry name" value="Oxidoreductase-like_N"/>
</dbReference>
<dbReference type="InterPro" id="IPR039251">
    <property type="entry name" value="OXLD1"/>
</dbReference>
<dbReference type="PANTHER" id="PTHR21193">
    <property type="entry name" value="OXIDOREDUCTASE-LIKE DOMAIN-CONTAINING PROTEIN 1"/>
    <property type="match status" value="1"/>
</dbReference>
<dbReference type="PANTHER" id="PTHR21193:SF3">
    <property type="entry name" value="OXIDOREDUCTASE-LIKE DOMAIN-CONTAINING PROTEIN 1"/>
    <property type="match status" value="1"/>
</dbReference>
<dbReference type="Pfam" id="PF09791">
    <property type="entry name" value="Oxidored-like"/>
    <property type="match status" value="1"/>
</dbReference>
<protein>
    <recommendedName>
        <fullName>Oxidoreductase-like domain-containing protein 1</fullName>
    </recommendedName>
</protein>
<accession>A7YVI8</accession>
<reference key="1">
    <citation type="submission" date="2006-09" db="EMBL/GenBank/DDBJ databases">
        <authorList>
            <consortium name="NIH - Mammalian Gene Collection (MGC) project"/>
        </authorList>
    </citation>
    <scope>NUCLEOTIDE SEQUENCE [LARGE SCALE MRNA]</scope>
    <source>
        <strain>Hereford</strain>
        <tissue>Fetal skin</tissue>
    </source>
</reference>
<sequence>MLLRRVTGGGRAVVAATLGGGPLSSWDWCQKLPGGGSLLRRIQVREAHREFGKNHVEVGSQAGAAGTGQPKSSLQGGGPSGPLYPPPPELQPPTNCCMSGCPNCVWVEYADALLQHYQDGGERALAALEEHVTDENLKAFLRMEIQLRIRSGG</sequence>
<organism>
    <name type="scientific">Bos taurus</name>
    <name type="common">Bovine</name>
    <dbReference type="NCBI Taxonomy" id="9913"/>
    <lineage>
        <taxon>Eukaryota</taxon>
        <taxon>Metazoa</taxon>
        <taxon>Chordata</taxon>
        <taxon>Craniata</taxon>
        <taxon>Vertebrata</taxon>
        <taxon>Euteleostomi</taxon>
        <taxon>Mammalia</taxon>
        <taxon>Eutheria</taxon>
        <taxon>Laurasiatheria</taxon>
        <taxon>Artiodactyla</taxon>
        <taxon>Ruminantia</taxon>
        <taxon>Pecora</taxon>
        <taxon>Bovidae</taxon>
        <taxon>Bovinae</taxon>
        <taxon>Bos</taxon>
    </lineage>
</organism>
<evidence type="ECO:0000256" key="1">
    <source>
        <dbReference type="SAM" id="MobiDB-lite"/>
    </source>
</evidence>
<gene>
    <name type="primary">OXLD1</name>
</gene>
<keyword id="KW-1185">Reference proteome</keyword>
<feature type="chain" id="PRO_0000314122" description="Oxidoreductase-like domain-containing protein 1">
    <location>
        <begin position="1"/>
        <end position="153"/>
    </location>
</feature>
<feature type="domain" description="Oxidoreductase-like">
    <location>
        <begin position="84"/>
        <end position="118"/>
    </location>
</feature>
<feature type="region of interest" description="Disordered" evidence="1">
    <location>
        <begin position="55"/>
        <end position="87"/>
    </location>
</feature>